<dbReference type="EMBL" id="Y12760">
    <property type="protein sequence ID" value="CAA73300.1"/>
    <property type="molecule type" value="mRNA"/>
</dbReference>
<dbReference type="RefSeq" id="NP_067597.2">
    <property type="nucleotide sequence ID" value="NM_021586.2"/>
</dbReference>
<dbReference type="FunCoup" id="O35806">
    <property type="interactions" value="112"/>
</dbReference>
<dbReference type="STRING" id="10116.ENSRNOP00000071831"/>
<dbReference type="GlyCosmos" id="O35806">
    <property type="glycosylation" value="8 sites, No reported glycans"/>
</dbReference>
<dbReference type="GlyGen" id="O35806">
    <property type="glycosylation" value="9 sites"/>
</dbReference>
<dbReference type="iPTMnet" id="O35806"/>
<dbReference type="PhosphoSitePlus" id="O35806"/>
<dbReference type="PaxDb" id="10116-ENSRNOP00000038437"/>
<dbReference type="GeneID" id="59106"/>
<dbReference type="KEGG" id="rno:59106"/>
<dbReference type="UCSC" id="RGD:68380">
    <property type="organism name" value="rat"/>
</dbReference>
<dbReference type="AGR" id="RGD:68380"/>
<dbReference type="CTD" id="4053"/>
<dbReference type="RGD" id="68380">
    <property type="gene designation" value="Ltbp2"/>
</dbReference>
<dbReference type="eggNOG" id="KOG1217">
    <property type="taxonomic scope" value="Eukaryota"/>
</dbReference>
<dbReference type="InParanoid" id="O35806"/>
<dbReference type="PhylomeDB" id="O35806"/>
<dbReference type="Reactome" id="R-RNO-2129379">
    <property type="pathway name" value="Molecules associated with elastic fibres"/>
</dbReference>
<dbReference type="Reactome" id="R-RNO-2173789">
    <property type="pathway name" value="TGF-beta receptor signaling activates SMADs"/>
</dbReference>
<dbReference type="PRO" id="PR:O35806"/>
<dbReference type="Proteomes" id="UP000002494">
    <property type="component" value="Unplaced"/>
</dbReference>
<dbReference type="GO" id="GO:0005576">
    <property type="term" value="C:extracellular region"/>
    <property type="evidence" value="ECO:0007669"/>
    <property type="project" value="UniProtKB-KW"/>
</dbReference>
<dbReference type="GO" id="GO:0005509">
    <property type="term" value="F:calcium ion binding"/>
    <property type="evidence" value="ECO:0007669"/>
    <property type="project" value="InterPro"/>
</dbReference>
<dbReference type="GO" id="GO:0019838">
    <property type="term" value="F:growth factor binding"/>
    <property type="evidence" value="ECO:0007669"/>
    <property type="project" value="UniProtKB-KW"/>
</dbReference>
<dbReference type="GO" id="GO:0008201">
    <property type="term" value="F:heparin binding"/>
    <property type="evidence" value="ECO:0007669"/>
    <property type="project" value="UniProtKB-KW"/>
</dbReference>
<dbReference type="GO" id="GO:0050436">
    <property type="term" value="F:microfibril binding"/>
    <property type="evidence" value="ECO:0000318"/>
    <property type="project" value="GO_Central"/>
</dbReference>
<dbReference type="GO" id="GO:0043279">
    <property type="term" value="P:response to alkaloid"/>
    <property type="evidence" value="ECO:0000270"/>
    <property type="project" value="RGD"/>
</dbReference>
<dbReference type="GO" id="GO:0097435">
    <property type="term" value="P:supramolecular fiber organization"/>
    <property type="evidence" value="ECO:0000266"/>
    <property type="project" value="RGD"/>
</dbReference>
<dbReference type="GO" id="GO:0007179">
    <property type="term" value="P:transforming growth factor beta receptor signaling pathway"/>
    <property type="evidence" value="ECO:0000303"/>
    <property type="project" value="RGD"/>
</dbReference>
<dbReference type="CDD" id="cd00054">
    <property type="entry name" value="EGF_CA"/>
    <property type="match status" value="13"/>
</dbReference>
<dbReference type="FunFam" id="2.10.25.10:FF:000194">
    <property type="entry name" value="Latent transforming growth factor beta binding protein 2"/>
    <property type="match status" value="2"/>
</dbReference>
<dbReference type="FunFam" id="2.10.25.10:FF:000364">
    <property type="entry name" value="Latent transforming growth factor beta binding protein 2"/>
    <property type="match status" value="1"/>
</dbReference>
<dbReference type="FunFam" id="2.10.25.10:FF:000469">
    <property type="entry name" value="Latent transforming growth factor beta binding protein 2"/>
    <property type="match status" value="1"/>
</dbReference>
<dbReference type="FunFam" id="2.10.25.10:FF:000509">
    <property type="entry name" value="Latent transforming growth factor beta binding protein 2"/>
    <property type="match status" value="1"/>
</dbReference>
<dbReference type="FunFam" id="2.10.25.10:FF:000205">
    <property type="entry name" value="latent-transforming growth factor beta-binding protein 1 isoform X1"/>
    <property type="match status" value="1"/>
</dbReference>
<dbReference type="FunFam" id="3.90.290.10:FF:000004">
    <property type="entry name" value="latent-transforming growth factor beta-binding protein 1 isoform X1"/>
    <property type="match status" value="1"/>
</dbReference>
<dbReference type="FunFam" id="2.10.25.10:FF:000046">
    <property type="entry name" value="Latent-transforming growth factor beta-binding protein 1 isoform x2"/>
    <property type="match status" value="1"/>
</dbReference>
<dbReference type="FunFam" id="3.90.290.10:FF:000019">
    <property type="entry name" value="latent-transforming growth factor beta-binding protein 2 isoform X3"/>
    <property type="match status" value="1"/>
</dbReference>
<dbReference type="FunFam" id="2.10.25.10:FF:000014">
    <property type="entry name" value="Latent-transforming growth factor beta-binding protein 3"/>
    <property type="match status" value="1"/>
</dbReference>
<dbReference type="FunFam" id="2.10.25.10:FF:000077">
    <property type="entry name" value="Latent-transforming growth factor beta-binding protein 3 isoform 1"/>
    <property type="match status" value="1"/>
</dbReference>
<dbReference type="FunFam" id="3.90.290.10:FF:000001">
    <property type="entry name" value="Latent-transforming growth factor beta-binding protein 3 isoform 1"/>
    <property type="match status" value="1"/>
</dbReference>
<dbReference type="FunFam" id="3.90.290.10:FF:000002">
    <property type="entry name" value="Latent-transforming growth factor beta-binding protein 3 isoform 1"/>
    <property type="match status" value="1"/>
</dbReference>
<dbReference type="FunFam" id="2.10.25.10:FF:000056">
    <property type="entry name" value="Latent-transforming growth factor beta-binding protein 3 isoform 2"/>
    <property type="match status" value="1"/>
</dbReference>
<dbReference type="FunFam" id="2.10.25.10:FF:000115">
    <property type="entry name" value="latent-transforming growth factor beta-binding protein 4 isoform X2"/>
    <property type="match status" value="1"/>
</dbReference>
<dbReference type="FunFam" id="2.10.25.10:FF:000024">
    <property type="entry name" value="Putative latent-transforming growth factor beta-binding protein 2"/>
    <property type="match status" value="5"/>
</dbReference>
<dbReference type="FunFam" id="2.10.25.10:FF:000273">
    <property type="entry name" value="Putative latent-transforming growth factor beta-binding protein 2"/>
    <property type="match status" value="1"/>
</dbReference>
<dbReference type="Gene3D" id="2.10.25.10">
    <property type="entry name" value="Laminin"/>
    <property type="match status" value="18"/>
</dbReference>
<dbReference type="Gene3D" id="3.90.290.10">
    <property type="entry name" value="TGF-beta binding (TB) domain"/>
    <property type="match status" value="4"/>
</dbReference>
<dbReference type="InterPro" id="IPR050751">
    <property type="entry name" value="ECM_structural_protein"/>
</dbReference>
<dbReference type="InterPro" id="IPR001881">
    <property type="entry name" value="EGF-like_Ca-bd_dom"/>
</dbReference>
<dbReference type="InterPro" id="IPR013032">
    <property type="entry name" value="EGF-like_CS"/>
</dbReference>
<dbReference type="InterPro" id="IPR000742">
    <property type="entry name" value="EGF-like_dom"/>
</dbReference>
<dbReference type="InterPro" id="IPR000152">
    <property type="entry name" value="EGF-type_Asp/Asn_hydroxyl_site"/>
</dbReference>
<dbReference type="InterPro" id="IPR018097">
    <property type="entry name" value="EGF_Ca-bd_CS"/>
</dbReference>
<dbReference type="InterPro" id="IPR009030">
    <property type="entry name" value="Growth_fac_rcpt_cys_sf"/>
</dbReference>
<dbReference type="InterPro" id="IPR049883">
    <property type="entry name" value="NOTCH1_EGF-like"/>
</dbReference>
<dbReference type="InterPro" id="IPR017878">
    <property type="entry name" value="TB_dom"/>
</dbReference>
<dbReference type="InterPro" id="IPR036773">
    <property type="entry name" value="TB_dom_sf"/>
</dbReference>
<dbReference type="PANTHER" id="PTHR24034">
    <property type="entry name" value="EGF-LIKE DOMAIN-CONTAINING PROTEIN"/>
    <property type="match status" value="1"/>
</dbReference>
<dbReference type="PANTHER" id="PTHR24034:SF209">
    <property type="entry name" value="EGF-LIKE DOMAIN-CONTAINING PROTEIN"/>
    <property type="match status" value="1"/>
</dbReference>
<dbReference type="Pfam" id="PF00008">
    <property type="entry name" value="EGF"/>
    <property type="match status" value="2"/>
</dbReference>
<dbReference type="Pfam" id="PF07645">
    <property type="entry name" value="EGF_CA"/>
    <property type="match status" value="14"/>
</dbReference>
<dbReference type="Pfam" id="PF12661">
    <property type="entry name" value="hEGF"/>
    <property type="match status" value="1"/>
</dbReference>
<dbReference type="Pfam" id="PF00683">
    <property type="entry name" value="TB"/>
    <property type="match status" value="4"/>
</dbReference>
<dbReference type="PIRSF" id="PIRSF036312">
    <property type="entry name" value="Fibrillin"/>
    <property type="match status" value="1"/>
</dbReference>
<dbReference type="SMART" id="SM00181">
    <property type="entry name" value="EGF"/>
    <property type="match status" value="19"/>
</dbReference>
<dbReference type="SMART" id="SM00179">
    <property type="entry name" value="EGF_CA"/>
    <property type="match status" value="17"/>
</dbReference>
<dbReference type="SUPFAM" id="SSF57196">
    <property type="entry name" value="EGF/Laminin"/>
    <property type="match status" value="5"/>
</dbReference>
<dbReference type="SUPFAM" id="SSF57184">
    <property type="entry name" value="Growth factor receptor domain"/>
    <property type="match status" value="4"/>
</dbReference>
<dbReference type="SUPFAM" id="SSF57581">
    <property type="entry name" value="TB module/8-cys domain"/>
    <property type="match status" value="4"/>
</dbReference>
<dbReference type="PROSITE" id="PS00070">
    <property type="entry name" value="ALDEHYDE_DEHYDR_CYS"/>
    <property type="match status" value="1"/>
</dbReference>
<dbReference type="PROSITE" id="PS00010">
    <property type="entry name" value="ASX_HYDROXYL"/>
    <property type="match status" value="12"/>
</dbReference>
<dbReference type="PROSITE" id="PS00022">
    <property type="entry name" value="EGF_1"/>
    <property type="match status" value="2"/>
</dbReference>
<dbReference type="PROSITE" id="PS01186">
    <property type="entry name" value="EGF_2"/>
    <property type="match status" value="11"/>
</dbReference>
<dbReference type="PROSITE" id="PS50026">
    <property type="entry name" value="EGF_3"/>
    <property type="match status" value="15"/>
</dbReference>
<dbReference type="PROSITE" id="PS01187">
    <property type="entry name" value="EGF_CA"/>
    <property type="match status" value="15"/>
</dbReference>
<dbReference type="PROSITE" id="PS51364">
    <property type="entry name" value="TB"/>
    <property type="match status" value="4"/>
</dbReference>
<proteinExistence type="evidence at protein level"/>
<keyword id="KW-1015">Disulfide bond</keyword>
<keyword id="KW-0245">EGF-like domain</keyword>
<keyword id="KW-0272">Extracellular matrix</keyword>
<keyword id="KW-0325">Glycoprotein</keyword>
<keyword id="KW-0340">Growth factor binding</keyword>
<keyword id="KW-0358">Heparin-binding</keyword>
<keyword id="KW-0379">Hydroxylation</keyword>
<keyword id="KW-0597">Phosphoprotein</keyword>
<keyword id="KW-1185">Reference proteome</keyword>
<keyword id="KW-0677">Repeat</keyword>
<keyword id="KW-0964">Secreted</keyword>
<keyword id="KW-0732">Signal</keyword>
<feature type="signal peptide" evidence="9">
    <location>
        <begin position="1"/>
        <end position="35"/>
    </location>
</feature>
<feature type="chain" id="PRO_0000007645" description="Latent-transforming growth factor beta-binding protein 2">
    <location>
        <begin position="36"/>
        <end position="1764"/>
    </location>
</feature>
<feature type="domain" description="EGF-like 1" evidence="5">
    <location>
        <begin position="181"/>
        <end position="213"/>
    </location>
</feature>
<feature type="domain" description="EGF-like 2" evidence="5">
    <location>
        <begin position="383"/>
        <end position="415"/>
    </location>
</feature>
<feature type="domain" description="TB 1" evidence="6">
    <location>
        <begin position="538"/>
        <end position="590"/>
    </location>
</feature>
<feature type="domain" description="EGF-like 3; calcium-binding" evidence="5">
    <location>
        <begin position="608"/>
        <end position="648"/>
    </location>
</feature>
<feature type="domain" description="TB 2" evidence="6">
    <location>
        <begin position="658"/>
        <end position="710"/>
    </location>
</feature>
<feature type="domain" description="EGF-like 4" evidence="5">
    <location>
        <begin position="834"/>
        <end position="876"/>
    </location>
</feature>
<feature type="domain" description="EGF-like 5; calcium-binding" evidence="5">
    <location>
        <begin position="877"/>
        <end position="919"/>
    </location>
</feature>
<feature type="domain" description="EGF-like 6; calcium-binding" evidence="5">
    <location>
        <begin position="920"/>
        <end position="959"/>
    </location>
</feature>
<feature type="domain" description="EGF-like 7; calcium-binding" evidence="5">
    <location>
        <begin position="960"/>
        <end position="999"/>
    </location>
</feature>
<feature type="domain" description="EGF-like 8; calcium-binding" evidence="5">
    <location>
        <begin position="1000"/>
        <end position="1040"/>
    </location>
</feature>
<feature type="domain" description="EGF-like 9; calcium-binding" evidence="5">
    <location>
        <begin position="1041"/>
        <end position="1082"/>
    </location>
</feature>
<feature type="domain" description="EGF-like 10; calcium-binding" evidence="5">
    <location>
        <begin position="1083"/>
        <end position="1124"/>
    </location>
</feature>
<feature type="domain" description="EGF-like 11; calcium-binding" evidence="5">
    <location>
        <begin position="1125"/>
        <end position="1165"/>
    </location>
</feature>
<feature type="domain" description="EGF-like 12; calcium-binding" evidence="5">
    <location>
        <begin position="1166"/>
        <end position="1207"/>
    </location>
</feature>
<feature type="domain" description="EGF-like 13; calcium-binding" evidence="5">
    <location>
        <begin position="1208"/>
        <end position="1248"/>
    </location>
</feature>
<feature type="domain" description="EGF-like 15; calcium-binding" evidence="5">
    <location>
        <begin position="1249"/>
        <end position="1290"/>
    </location>
</feature>
<feature type="domain" description="EGF-like 16; calcium-binding" evidence="5">
    <location>
        <begin position="1291"/>
        <end position="1333"/>
    </location>
</feature>
<feature type="domain" description="TB 3" evidence="6">
    <location>
        <begin position="1357"/>
        <end position="1409"/>
    </location>
</feature>
<feature type="domain" description="EGF-like 17; calcium-binding" evidence="5">
    <location>
        <begin position="1431"/>
        <end position="1473"/>
    </location>
</feature>
<feature type="domain" description="EGF-like 18; calcium-binding" evidence="5">
    <location>
        <begin position="1474"/>
        <end position="1513"/>
    </location>
</feature>
<feature type="domain" description="TB 4" evidence="6">
    <location>
        <begin position="1530"/>
        <end position="1582"/>
    </location>
</feature>
<feature type="domain" description="EGF-like 19; calcium-binding" evidence="5">
    <location>
        <begin position="1676"/>
        <end position="1716"/>
    </location>
</feature>
<feature type="domain" description="EGF-like 20; calcium-binding" evidence="5">
    <location>
        <begin position="1717"/>
        <end position="1761"/>
    </location>
</feature>
<feature type="region of interest" description="Disordered" evidence="7">
    <location>
        <begin position="80"/>
        <end position="140"/>
    </location>
</feature>
<feature type="region of interest" description="Heparin-binding" evidence="1">
    <location>
        <begin position="94"/>
        <end position="115"/>
    </location>
</feature>
<feature type="region of interest" description="Disordered" evidence="7">
    <location>
        <begin position="220"/>
        <end position="279"/>
    </location>
</feature>
<feature type="region of interest" description="Heparin-binding" evidence="1">
    <location>
        <begin position="226"/>
        <end position="243"/>
    </location>
</feature>
<feature type="region of interest" description="Disordered" evidence="7">
    <location>
        <begin position="484"/>
        <end position="529"/>
    </location>
</feature>
<feature type="region of interest" description="Disordered" evidence="7">
    <location>
        <begin position="729"/>
        <end position="759"/>
    </location>
</feature>
<feature type="region of interest" description="Disordered" evidence="7">
    <location>
        <begin position="786"/>
        <end position="809"/>
    </location>
</feature>
<feature type="region of interest" description="C-terminal domain" evidence="3">
    <location>
        <begin position="1585"/>
        <end position="1764"/>
    </location>
</feature>
<feature type="compositionally biased region" description="Polar residues" evidence="7">
    <location>
        <begin position="108"/>
        <end position="128"/>
    </location>
</feature>
<feature type="compositionally biased region" description="Pro residues" evidence="7">
    <location>
        <begin position="257"/>
        <end position="266"/>
    </location>
</feature>
<feature type="binding site" evidence="1">
    <location>
        <begin position="331"/>
        <end position="341"/>
    </location>
    <ligand>
        <name>heparin</name>
        <dbReference type="ChEBI" id="CHEBI:28304"/>
    </ligand>
</feature>
<feature type="modified residue" description="Phosphoserine" evidence="11">
    <location>
        <position position="493"/>
    </location>
</feature>
<feature type="glycosylation site" description="N-linked (GlcNAc...) asparagine" evidence="4">
    <location>
        <position position="175"/>
    </location>
</feature>
<feature type="glycosylation site" description="N-linked (GlcNAc...) asparagine" evidence="4">
    <location>
        <position position="330"/>
    </location>
</feature>
<feature type="glycosylation site" description="N-linked (GlcNAc...) asparagine" evidence="4">
    <location>
        <position position="408"/>
    </location>
</feature>
<feature type="glycosylation site" description="N-linked (GlcNAc...) asparagine" evidence="4">
    <location>
        <position position="602"/>
    </location>
</feature>
<feature type="glycosylation site" description="N-linked (GlcNAc...) asparagine" evidence="4">
    <location>
        <position position="1160"/>
    </location>
</feature>
<feature type="glycosylation site" description="N-linked (GlcNAc...) asparagine" evidence="4">
    <location>
        <position position="1255"/>
    </location>
</feature>
<feature type="glycosylation site" description="N-linked (GlcNAc...) asparagine" evidence="4">
    <location>
        <position position="1376"/>
    </location>
</feature>
<feature type="glycosylation site" description="N-linked (GlcNAc...) asparagine" evidence="4">
    <location>
        <position position="1514"/>
    </location>
</feature>
<feature type="disulfide bond" evidence="5">
    <location>
        <begin position="185"/>
        <end position="195"/>
    </location>
</feature>
<feature type="disulfide bond" evidence="5">
    <location>
        <begin position="189"/>
        <end position="201"/>
    </location>
</feature>
<feature type="disulfide bond" evidence="5">
    <location>
        <begin position="203"/>
        <end position="212"/>
    </location>
</feature>
<feature type="disulfide bond" evidence="5">
    <location>
        <begin position="387"/>
        <end position="397"/>
    </location>
</feature>
<feature type="disulfide bond" evidence="5">
    <location>
        <begin position="391"/>
        <end position="403"/>
    </location>
</feature>
<feature type="disulfide bond" evidence="5">
    <location>
        <begin position="405"/>
        <end position="414"/>
    </location>
</feature>
<feature type="disulfide bond" evidence="6">
    <location>
        <begin position="540"/>
        <end position="562"/>
    </location>
</feature>
<feature type="disulfide bond" evidence="6">
    <location>
        <begin position="549"/>
        <end position="575"/>
    </location>
</feature>
<feature type="disulfide bond" evidence="6">
    <location>
        <begin position="563"/>
        <end position="578"/>
    </location>
</feature>
<feature type="disulfide bond" evidence="5">
    <location>
        <begin position="612"/>
        <end position="623"/>
    </location>
</feature>
<feature type="disulfide bond" evidence="5">
    <location>
        <begin position="618"/>
        <end position="632"/>
    </location>
</feature>
<feature type="disulfide bond" evidence="5">
    <location>
        <begin position="634"/>
        <end position="647"/>
    </location>
</feature>
<feature type="disulfide bond" evidence="6">
    <location>
        <begin position="660"/>
        <end position="682"/>
    </location>
</feature>
<feature type="disulfide bond" evidence="6">
    <location>
        <begin position="669"/>
        <end position="695"/>
    </location>
</feature>
<feature type="disulfide bond" evidence="6">
    <location>
        <begin position="683"/>
        <end position="698"/>
    </location>
</feature>
<feature type="disulfide bond" evidence="6">
    <location>
        <begin position="684"/>
        <end position="710"/>
    </location>
</feature>
<feature type="disulfide bond" evidence="5">
    <location>
        <begin position="838"/>
        <end position="851"/>
    </location>
</feature>
<feature type="disulfide bond" evidence="5">
    <location>
        <begin position="846"/>
        <end position="860"/>
    </location>
</feature>
<feature type="disulfide bond" evidence="5">
    <location>
        <begin position="862"/>
        <end position="875"/>
    </location>
</feature>
<feature type="disulfide bond" evidence="5">
    <location>
        <begin position="881"/>
        <end position="892"/>
    </location>
</feature>
<feature type="disulfide bond" evidence="5">
    <location>
        <begin position="886"/>
        <end position="901"/>
    </location>
</feature>
<feature type="disulfide bond" evidence="5">
    <location>
        <begin position="903"/>
        <end position="918"/>
    </location>
</feature>
<feature type="disulfide bond" evidence="5">
    <location>
        <begin position="924"/>
        <end position="935"/>
    </location>
</feature>
<feature type="disulfide bond" evidence="5">
    <location>
        <begin position="930"/>
        <end position="944"/>
    </location>
</feature>
<feature type="disulfide bond" evidence="5">
    <location>
        <begin position="946"/>
        <end position="958"/>
    </location>
</feature>
<feature type="disulfide bond" evidence="5">
    <location>
        <begin position="964"/>
        <end position="975"/>
    </location>
</feature>
<feature type="disulfide bond" evidence="5">
    <location>
        <begin position="970"/>
        <end position="984"/>
    </location>
</feature>
<feature type="disulfide bond" evidence="5">
    <location>
        <begin position="987"/>
        <end position="998"/>
    </location>
</feature>
<feature type="disulfide bond" evidence="5">
    <location>
        <begin position="1004"/>
        <end position="1015"/>
    </location>
</feature>
<feature type="disulfide bond" evidence="5">
    <location>
        <begin position="1010"/>
        <end position="1024"/>
    </location>
</feature>
<feature type="disulfide bond" evidence="5">
    <location>
        <begin position="1026"/>
        <end position="1039"/>
    </location>
</feature>
<feature type="disulfide bond" evidence="5">
    <location>
        <begin position="1045"/>
        <end position="1056"/>
    </location>
</feature>
<feature type="disulfide bond" evidence="5">
    <location>
        <begin position="1051"/>
        <end position="1065"/>
    </location>
</feature>
<feature type="disulfide bond" evidence="5">
    <location>
        <begin position="1068"/>
        <end position="1081"/>
    </location>
</feature>
<feature type="disulfide bond" evidence="5">
    <location>
        <begin position="1087"/>
        <end position="1098"/>
    </location>
</feature>
<feature type="disulfide bond" evidence="5">
    <location>
        <begin position="1093"/>
        <end position="1107"/>
    </location>
</feature>
<feature type="disulfide bond" evidence="5">
    <location>
        <begin position="1110"/>
        <end position="1123"/>
    </location>
</feature>
<feature type="disulfide bond" evidence="5">
    <location>
        <begin position="1129"/>
        <end position="1141"/>
    </location>
</feature>
<feature type="disulfide bond" evidence="5">
    <location>
        <begin position="1136"/>
        <end position="1150"/>
    </location>
</feature>
<feature type="disulfide bond" evidence="5">
    <location>
        <begin position="1152"/>
        <end position="1164"/>
    </location>
</feature>
<feature type="disulfide bond" evidence="5">
    <location>
        <begin position="1170"/>
        <end position="1182"/>
    </location>
</feature>
<feature type="disulfide bond" evidence="5">
    <location>
        <begin position="1176"/>
        <end position="1191"/>
    </location>
</feature>
<feature type="disulfide bond" evidence="5">
    <location>
        <begin position="1193"/>
        <end position="1206"/>
    </location>
</feature>
<feature type="disulfide bond" evidence="5">
    <location>
        <begin position="1212"/>
        <end position="1223"/>
    </location>
</feature>
<feature type="disulfide bond" evidence="5">
    <location>
        <begin position="1218"/>
        <end position="1232"/>
    </location>
</feature>
<feature type="disulfide bond" evidence="5">
    <location>
        <begin position="1234"/>
        <end position="1247"/>
    </location>
</feature>
<feature type="disulfide bond" evidence="5">
    <location>
        <begin position="1253"/>
        <end position="1265"/>
    </location>
</feature>
<feature type="disulfide bond" evidence="5">
    <location>
        <begin position="1259"/>
        <end position="1274"/>
    </location>
</feature>
<feature type="disulfide bond" evidence="5">
    <location>
        <begin position="1276"/>
        <end position="1289"/>
    </location>
</feature>
<feature type="disulfide bond" evidence="5">
    <location>
        <begin position="1295"/>
        <end position="1307"/>
    </location>
</feature>
<feature type="disulfide bond" evidence="5">
    <location>
        <begin position="1302"/>
        <end position="1316"/>
    </location>
</feature>
<feature type="disulfide bond" evidence="5">
    <location>
        <begin position="1318"/>
        <end position="1332"/>
    </location>
</feature>
<feature type="disulfide bond" evidence="6">
    <location>
        <begin position="1359"/>
        <end position="1382"/>
    </location>
</feature>
<feature type="disulfide bond" evidence="6">
    <location>
        <begin position="1369"/>
        <end position="1394"/>
    </location>
</feature>
<feature type="disulfide bond" evidence="6">
    <location>
        <begin position="1383"/>
        <end position="1397"/>
    </location>
</feature>
<feature type="disulfide bond" evidence="5">
    <location>
        <begin position="1435"/>
        <end position="1448"/>
    </location>
</feature>
<feature type="disulfide bond" evidence="5">
    <location>
        <begin position="1443"/>
        <end position="1457"/>
    </location>
</feature>
<feature type="disulfide bond" evidence="5">
    <location>
        <begin position="1459"/>
        <end position="1472"/>
    </location>
</feature>
<feature type="disulfide bond" evidence="5">
    <location>
        <begin position="1478"/>
        <end position="1488"/>
    </location>
</feature>
<feature type="disulfide bond" evidence="5">
    <location>
        <begin position="1483"/>
        <end position="1497"/>
    </location>
</feature>
<feature type="disulfide bond" evidence="5">
    <location>
        <begin position="1499"/>
        <end position="1512"/>
    </location>
</feature>
<feature type="disulfide bond" evidence="6">
    <location>
        <begin position="1532"/>
        <end position="1555"/>
    </location>
</feature>
<feature type="disulfide bond" evidence="6">
    <location>
        <begin position="1541"/>
        <end position="1567"/>
    </location>
</feature>
<feature type="disulfide bond" evidence="6">
    <location>
        <begin position="1556"/>
        <end position="1570"/>
    </location>
</feature>
<feature type="disulfide bond" evidence="6">
    <location>
        <begin position="1557"/>
        <end position="1582"/>
    </location>
</feature>
<feature type="disulfide bond" evidence="5">
    <location>
        <begin position="1680"/>
        <end position="1691"/>
    </location>
</feature>
<feature type="disulfide bond" evidence="5">
    <location>
        <begin position="1686"/>
        <end position="1700"/>
    </location>
</feature>
<feature type="disulfide bond" evidence="5">
    <location>
        <begin position="1702"/>
        <end position="1715"/>
    </location>
</feature>
<feature type="disulfide bond" evidence="5">
    <location>
        <begin position="1721"/>
        <end position="1736"/>
    </location>
</feature>
<feature type="disulfide bond" evidence="5">
    <location>
        <begin position="1731"/>
        <end position="1745"/>
    </location>
</feature>
<feature type="disulfide bond" evidence="5">
    <location>
        <begin position="1747"/>
        <end position="1760"/>
    </location>
</feature>
<sequence length="1764" mass="189867">MRAPTTVRCSGRIQRARWRGFLPLVLALLMGTSHAQRDSVGRYEPASRDANRLWRPVGNHPAAAAAKVYSLFREPDAPVPGLSPSEWNQPGQGIPGRLAEAEARRPSRAQQLRRVQSPVQTRRSNPRGQQPPAARTAHSVVRLATPQRPAAARRGRLTGRNVCGGQCCPGWTTSNSTNHCIKPVCQPPCQNRGSCSRPQLCICRSGFRGARCEEVIPEEEFDPQNARPVPRRSVEGAPGPHRSSEARGSLVTRIQPLLPPLPPPPSRTLSQTRPLQQHAGLSRTVRRYPATGTNGQLMSNALPSGPGPELRDSSQQAAHMNHLSHPWGLNLTEKIKKIKVVFTPTICKQTCARGRCANTCEKGDTTTLYSQGGHGHDPKSGFRIYFCQIPCLNGGRCIGRDECWCPANSTGKFCHLPVPQPDREPPGRGSQHRALLEGPLKQSTFTLPLSNQLASVNPSLVKVQMQHPPEASVQIHQVARVRGEVDPVPEDNSVETRASHRPHGSSGHSHWASNSIPARAGEAPRPPPVPSRHYGLLGQCYLSTVNGQCANPLGELTSQEDCCGSVGTSWGVTSCAPCPPRPAFPVIENGQLECPQGYKRLNLSHCQDINECLTLGLCKDSECVNTRGSYLCTCRPGLMLDPSRSRCVSDKAVSMKQGLCYRSMVSGTCTLPLVQRITKQICCCSRVGKAWGSKCEHCPLPGTEAFREICPAGHGYAYSSSDIRLSMRKAEEEELASPVREQRQQSSGPPPGAAERQPLRAATATWIEAETLPDKGDSRAIQITTSAPHLPARVPGDATGRPTPSLPGQGIPEGPAEEQVIPSSDVLVTHGPPGFDPCFAGASNICGPGTCVKLPNGYRCVCSPGYQLHPSQDYCTDDNECLRNPCEGRGRCVNSVGSYSCLCYPGYTLATLGDTQECQDVDECEQPGVCSGGRCSNTEGSYHCECDQGYVMVRRGHCQDINECRHPGTCPDGRCVNSPGSYTCLACEEGYIGQSGNCVDMNECLTPGICAHGRCINMEGSFRCSCEPGYELTPDKKGCRDVDECASRASCPTGLCLNTEGSFTCSACQSGYWVNEDGTACEDLDECAFPGVCPTGVCTNTVGSFSCKDCDRGFRPSPLGNSCEDVDECEGPQNSCLGGECKNTDGSYQCLCPQGFQLANGTVCEDVDECVGEEHCAPHGECLNSPGSFFCLCAPGFASAEGGTRCQDVDECATTEPCLGGHCVNTEGSFNCLCETGFQPAPDSGECVDIDECANDTVCGNHGFCDNTDGSFRCLCDQGFETSPSGWECVDVNECELMLAVCGDALCENVEGSFLCLCASDLEEYDAEEGHCRPRVAGAQRIPEVPTEEQAAGLTGMECYAEHNGGPPCSQILGQNSTQAECCSTQGARWGETCDPCPSEDSVEFSELCPSGQGYIPVEGAWTFGQAMYTDADECILFGPALCQNGRCLNTVPGYICLCNPGYHYDAVSRKCQDHNECQDLACENGECVNTEGSFHCFCSPPLILDLSGQRCVNSTSSSEDFPDHDIHMDICWKKVTNDVCSQPLRGHHTTYTECCCQDGEAWSQQCALCPPRSSEVYAQLCNVARIEAEREAGIHFRPGYEYGPGPDDLPETLYGPDGAPFYNYLGPEDTVPEPPFSNTASHLGDNTPILEPPLQPSELQPPAIQNPLASFEGLQAEECGILNGCENGRCVRVREGYTCDCFEGFQLDTALMACVDVNECEDLNGAARLCAHGHCENTEGSYRCHCSPGYVAEPGPPHCAAKE</sequence>
<evidence type="ECO:0000250" key="1"/>
<evidence type="ECO:0000250" key="2">
    <source>
        <dbReference type="UniProtKB" id="Q14766"/>
    </source>
</evidence>
<evidence type="ECO:0000250" key="3">
    <source>
        <dbReference type="UniProtKB" id="Q14767"/>
    </source>
</evidence>
<evidence type="ECO:0000255" key="4"/>
<evidence type="ECO:0000255" key="5">
    <source>
        <dbReference type="PROSITE-ProRule" id="PRU00076"/>
    </source>
</evidence>
<evidence type="ECO:0000255" key="6">
    <source>
        <dbReference type="PROSITE-ProRule" id="PRU00697"/>
    </source>
</evidence>
<evidence type="ECO:0000256" key="7">
    <source>
        <dbReference type="SAM" id="MobiDB-lite"/>
    </source>
</evidence>
<evidence type="ECO:0000269" key="8">
    <source>
    </source>
</evidence>
<evidence type="ECO:0000269" key="9">
    <source>
    </source>
</evidence>
<evidence type="ECO:0000305" key="10"/>
<evidence type="ECO:0007744" key="11">
    <source>
    </source>
</evidence>
<comment type="function">
    <text evidence="3">May play an integral structural role in elastic-fiber architectural organization and/or assembly.</text>
</comment>
<comment type="subunit">
    <text evidence="3">Forms part of the large latent transforming growth factor beta precursor complex; removal is essential for activation of complex. Interacts with SDC4. Interacts (via C-terminal domain) with FBN1 (via N-terminal domain) in a Ca(+2)-dependent manner.</text>
</comment>
<comment type="subcellular location">
    <subcellularLocation>
        <location evidence="3">Secreted</location>
        <location evidence="3">Extracellular space</location>
        <location evidence="3">Extracellular matrix</location>
    </subcellularLocation>
</comment>
<comment type="tissue specificity">
    <text evidence="8">Expressed in cortical astrocytes and glioma cells. Expression is up-regulated by TGFB1.</text>
</comment>
<comment type="PTM">
    <text evidence="3">N-Glycosylated.</text>
</comment>
<comment type="PTM">
    <text evidence="2">Contains hydroxylated asparagine residues.</text>
</comment>
<comment type="similarity">
    <text evidence="10">Belongs to the LTBP family.</text>
</comment>
<reference key="1">
    <citation type="journal article" date="1999" name="Glia">
        <title>TGF-beta1-dependent differential expression of a rat homolog for latent TGF-beta binding protein in astrocytes and C6 glioma cells.</title>
        <authorList>
            <person name="Krohn K."/>
        </authorList>
    </citation>
    <scope>NUCLEOTIDE SEQUENCE [MRNA]</scope>
    <scope>TISSUE SPECIFICITY</scope>
    <source>
        <tissue>Lung</tissue>
    </source>
</reference>
<reference key="2">
    <citation type="journal article" date="1999" name="Cytokine Growth Factor Rev.">
        <title>Latent transforming growth factor-beta binding proteins (LTBPs) -- structural extracellular matrix proteins for targeting TGF-beta action.</title>
        <authorList>
            <person name="Saharinen J."/>
            <person name="Hyytiainen M."/>
            <person name="Taipale J."/>
            <person name="Keski-Oja J."/>
        </authorList>
    </citation>
    <scope>REVIEW</scope>
</reference>
<reference key="3">
    <citation type="journal article" date="2000" name="Biochem. J.">
        <title>The latent transforming growth factor beta binding protein (LTBP) family.</title>
        <authorList>
            <person name="Oklu R."/>
            <person name="Hesketh R."/>
        </authorList>
    </citation>
    <scope>REVIEW</scope>
</reference>
<reference key="4">
    <citation type="journal article" date="2012" name="Nat. Commun.">
        <title>Quantitative maps of protein phosphorylation sites across 14 different rat organs and tissues.</title>
        <authorList>
            <person name="Lundby A."/>
            <person name="Secher A."/>
            <person name="Lage K."/>
            <person name="Nordsborg N.B."/>
            <person name="Dmytriyev A."/>
            <person name="Lundby C."/>
            <person name="Olsen J.V."/>
        </authorList>
    </citation>
    <scope>PHOSPHORYLATION [LARGE SCALE ANALYSIS] AT SER-493</scope>
    <scope>IDENTIFICATION BY MASS SPECTROMETRY [LARGE SCALE ANALYSIS]</scope>
</reference>
<reference key="5">
    <citation type="journal article" date="2015" name="J. Proteome Res.">
        <title>Peptidomics for studying limited proteolysis.</title>
        <authorList>
            <person name="Tsuchiya T."/>
            <person name="Osaki T."/>
            <person name="Minamino N."/>
            <person name="Sasaki K."/>
        </authorList>
    </citation>
    <scope>CLEAVAGE OF SIGNAL PEPTIDE AFTER ALA-35</scope>
    <scope>IDENTIFICATION BY MASS SPECTROMETRY</scope>
</reference>
<accession>O35806</accession>
<organism>
    <name type="scientific">Rattus norvegicus</name>
    <name type="common">Rat</name>
    <dbReference type="NCBI Taxonomy" id="10116"/>
    <lineage>
        <taxon>Eukaryota</taxon>
        <taxon>Metazoa</taxon>
        <taxon>Chordata</taxon>
        <taxon>Craniata</taxon>
        <taxon>Vertebrata</taxon>
        <taxon>Euteleostomi</taxon>
        <taxon>Mammalia</taxon>
        <taxon>Eutheria</taxon>
        <taxon>Euarchontoglires</taxon>
        <taxon>Glires</taxon>
        <taxon>Rodentia</taxon>
        <taxon>Myomorpha</taxon>
        <taxon>Muroidea</taxon>
        <taxon>Muridae</taxon>
        <taxon>Murinae</taxon>
        <taxon>Rattus</taxon>
    </lineage>
</organism>
<protein>
    <recommendedName>
        <fullName>Latent-transforming growth factor beta-binding protein 2</fullName>
        <shortName>LTBP-2</shortName>
    </recommendedName>
</protein>
<gene>
    <name type="primary">Ltbp2</name>
</gene>
<name>LTBP2_RAT</name>